<organism>
    <name type="scientific">Citrobacter freundii</name>
    <dbReference type="NCBI Taxonomy" id="546"/>
    <lineage>
        <taxon>Bacteria</taxon>
        <taxon>Pseudomonadati</taxon>
        <taxon>Pseudomonadota</taxon>
        <taxon>Gammaproteobacteria</taxon>
        <taxon>Enterobacterales</taxon>
        <taxon>Enterobacteriaceae</taxon>
        <taxon>Citrobacter</taxon>
        <taxon>Citrobacter freundii complex</taxon>
    </lineage>
</organism>
<name>ATR_CITFR</name>
<comment type="catalytic activity">
    <reaction>
        <text>2 cob(II)yrinate a,c diamide + reduced [electron-transfer flavoprotein] + 2 ATP = 2 adenosylcob(III)yrinate a,c-diamide + 2 triphosphate + oxidized [electron-transfer flavoprotein] + 3 H(+)</text>
        <dbReference type="Rhea" id="RHEA:11528"/>
        <dbReference type="Rhea" id="RHEA-COMP:10685"/>
        <dbReference type="Rhea" id="RHEA-COMP:10686"/>
        <dbReference type="ChEBI" id="CHEBI:15378"/>
        <dbReference type="ChEBI" id="CHEBI:18036"/>
        <dbReference type="ChEBI" id="CHEBI:30616"/>
        <dbReference type="ChEBI" id="CHEBI:57692"/>
        <dbReference type="ChEBI" id="CHEBI:58307"/>
        <dbReference type="ChEBI" id="CHEBI:58503"/>
        <dbReference type="ChEBI" id="CHEBI:58537"/>
        <dbReference type="EC" id="2.5.1.17"/>
    </reaction>
</comment>
<comment type="catalytic activity">
    <reaction>
        <text>2 cob(II)alamin + reduced [electron-transfer flavoprotein] + 2 ATP = 2 adenosylcob(III)alamin + 2 triphosphate + oxidized [electron-transfer flavoprotein] + 3 H(+)</text>
        <dbReference type="Rhea" id="RHEA:28671"/>
        <dbReference type="Rhea" id="RHEA-COMP:10685"/>
        <dbReference type="Rhea" id="RHEA-COMP:10686"/>
        <dbReference type="ChEBI" id="CHEBI:15378"/>
        <dbReference type="ChEBI" id="CHEBI:16304"/>
        <dbReference type="ChEBI" id="CHEBI:18036"/>
        <dbReference type="ChEBI" id="CHEBI:18408"/>
        <dbReference type="ChEBI" id="CHEBI:30616"/>
        <dbReference type="ChEBI" id="CHEBI:57692"/>
        <dbReference type="ChEBI" id="CHEBI:58307"/>
        <dbReference type="EC" id="2.5.1.17"/>
    </reaction>
</comment>
<comment type="pathway">
    <text>Cofactor biosynthesis; adenosylcobalamin biosynthesis; adenosylcobalamin from cob(II)yrinate a,c-diamide: step 2/7.</text>
</comment>
<comment type="subcellular location">
    <subcellularLocation>
        <location evidence="2">Cytoplasm</location>
    </subcellularLocation>
</comment>
<comment type="similarity">
    <text evidence="2">Belongs to the Cob(I)alamin adenosyltransferase family.</text>
</comment>
<accession>P45515</accession>
<dbReference type="EC" id="2.5.1.17"/>
<dbReference type="EMBL" id="U09771">
    <property type="protein sequence ID" value="AAB48846.1"/>
    <property type="molecule type" value="Genomic_DNA"/>
</dbReference>
<dbReference type="SMR" id="P45515"/>
<dbReference type="STRING" id="1333848.CFNIH1_02630"/>
<dbReference type="UniPathway" id="UPA00148">
    <property type="reaction ID" value="UER00233"/>
</dbReference>
<dbReference type="GO" id="GO:0005737">
    <property type="term" value="C:cytoplasm"/>
    <property type="evidence" value="ECO:0007669"/>
    <property type="project" value="UniProtKB-SubCell"/>
</dbReference>
<dbReference type="GO" id="GO:0005524">
    <property type="term" value="F:ATP binding"/>
    <property type="evidence" value="ECO:0007669"/>
    <property type="project" value="UniProtKB-KW"/>
</dbReference>
<dbReference type="GO" id="GO:0008817">
    <property type="term" value="F:corrinoid adenosyltransferase activity"/>
    <property type="evidence" value="ECO:0007669"/>
    <property type="project" value="UniProtKB-EC"/>
</dbReference>
<dbReference type="GO" id="GO:0009236">
    <property type="term" value="P:cobalamin biosynthetic process"/>
    <property type="evidence" value="ECO:0007669"/>
    <property type="project" value="UniProtKB-UniPathway"/>
</dbReference>
<dbReference type="GO" id="GO:0006779">
    <property type="term" value="P:porphyrin-containing compound biosynthetic process"/>
    <property type="evidence" value="ECO:0007669"/>
    <property type="project" value="UniProtKB-KW"/>
</dbReference>
<dbReference type="Gene3D" id="1.20.1200.10">
    <property type="entry name" value="Cobalamin adenosyltransferase-like"/>
    <property type="match status" value="1"/>
</dbReference>
<dbReference type="InterPro" id="IPR016030">
    <property type="entry name" value="CblAdoTrfase-like"/>
</dbReference>
<dbReference type="InterPro" id="IPR036451">
    <property type="entry name" value="CblAdoTrfase-like_sf"/>
</dbReference>
<dbReference type="InterPro" id="IPR029499">
    <property type="entry name" value="PduO-typ"/>
</dbReference>
<dbReference type="NCBIfam" id="TIGR00636">
    <property type="entry name" value="PduO_Nterm"/>
    <property type="match status" value="1"/>
</dbReference>
<dbReference type="PANTHER" id="PTHR12213">
    <property type="entry name" value="CORRINOID ADENOSYLTRANSFERASE"/>
    <property type="match status" value="1"/>
</dbReference>
<dbReference type="PANTHER" id="PTHR12213:SF0">
    <property type="entry name" value="CORRINOID ADENOSYLTRANSFERASE MMAB"/>
    <property type="match status" value="1"/>
</dbReference>
<dbReference type="Pfam" id="PF01923">
    <property type="entry name" value="Cob_adeno_trans"/>
    <property type="match status" value="1"/>
</dbReference>
<dbReference type="SUPFAM" id="SSF89028">
    <property type="entry name" value="Cobalamin adenosyltransferase-like"/>
    <property type="match status" value="1"/>
</dbReference>
<sequence length="176" mass="19846">MYRIYTRTGDNGTTALFGGSRIDKDDIRVEAYGTVDELISQLGVCYASTRQAELRQELHAMQKMLFVLGAELASDQKGLTRLKQRIGEEDIQALEQLIDRNMAQSGPLKEFVIPGKNLASAQLHVARTLTRRLERILIAMGRTLTLRDEARRYINRLSDALFSMARIEETTPDVCA</sequence>
<reference key="1">
    <citation type="submission" date="1994-05" db="EMBL/GenBank/DDBJ databases">
        <authorList>
            <person name="Daniel R."/>
            <person name="Gottschalk G."/>
        </authorList>
    </citation>
    <scope>NUCLEOTIDE SEQUENCE [GENOMIC DNA]</scope>
    <source>
        <strain>ATCC 6750 / DSM 30040 / NCIB 8173 / M8BK</strain>
    </source>
</reference>
<proteinExistence type="inferred from homology"/>
<evidence type="ECO:0000250" key="1"/>
<evidence type="ECO:0000305" key="2"/>
<keyword id="KW-0067">ATP-binding</keyword>
<keyword id="KW-0169">Cobalamin biosynthesis</keyword>
<keyword id="KW-0963">Cytoplasm</keyword>
<keyword id="KW-0547">Nucleotide-binding</keyword>
<keyword id="KW-0627">Porphyrin biosynthesis</keyword>
<keyword id="KW-0808">Transferase</keyword>
<protein>
    <recommendedName>
        <fullName>Corrinoid adenosyltransferase</fullName>
        <ecNumber>2.5.1.17</ecNumber>
    </recommendedName>
    <alternativeName>
        <fullName>Cob(II)alamin adenosyltransferase</fullName>
    </alternativeName>
    <alternativeName>
        <fullName>Cob(II)yrinic acid a,c-diamide adenosyltransferase</fullName>
    </alternativeName>
    <alternativeName>
        <fullName>Cobinamide/cobalamin adenosyltransferase</fullName>
    </alternativeName>
    <alternativeName>
        <fullName>ORFW</fullName>
    </alternativeName>
</protein>
<feature type="chain" id="PRO_0000103801" description="Corrinoid adenosyltransferase">
    <location>
        <begin position="1"/>
        <end position="176"/>
    </location>
</feature>
<feature type="binding site" evidence="1">
    <location>
        <begin position="6"/>
        <end position="14"/>
    </location>
    <ligand>
        <name>ATP</name>
        <dbReference type="ChEBI" id="CHEBI:30616"/>
    </ligand>
</feature>
<feature type="binding site" evidence="1">
    <location>
        <position position="24"/>
    </location>
    <ligand>
        <name>ATP</name>
        <dbReference type="ChEBI" id="CHEBI:30616"/>
    </ligand>
</feature>
<feature type="binding site" evidence="1">
    <location>
        <begin position="131"/>
        <end position="136"/>
    </location>
    <ligand>
        <name>ATP</name>
        <dbReference type="ChEBI" id="CHEBI:30616"/>
    </ligand>
</feature>
<feature type="binding site" evidence="1">
    <location>
        <position position="155"/>
    </location>
    <ligand>
        <name>ATP</name>
        <dbReference type="ChEBI" id="CHEBI:30616"/>
    </ligand>
</feature>